<accession>P30383</accession>
<organism>
    <name type="scientific">Gorilla gorilla gorilla</name>
    <name type="common">Western lowland gorilla</name>
    <dbReference type="NCBI Taxonomy" id="9595"/>
    <lineage>
        <taxon>Eukaryota</taxon>
        <taxon>Metazoa</taxon>
        <taxon>Chordata</taxon>
        <taxon>Craniata</taxon>
        <taxon>Vertebrata</taxon>
        <taxon>Euteleostomi</taxon>
        <taxon>Mammalia</taxon>
        <taxon>Eutheria</taxon>
        <taxon>Euarchontoglires</taxon>
        <taxon>Primates</taxon>
        <taxon>Haplorrhini</taxon>
        <taxon>Catarrhini</taxon>
        <taxon>Hominidae</taxon>
        <taxon>Gorilla</taxon>
    </lineage>
</organism>
<reference key="1">
    <citation type="journal article" date="1991" name="J. Exp. Med.">
        <title>Gorilla class I major histocompatibility complex alleles: comparison to human and chimpanzee class I.</title>
        <authorList>
            <person name="Lawlor D.A."/>
            <person name="Warren E."/>
            <person name="Taylor P."/>
            <person name="Parham P."/>
        </authorList>
    </citation>
    <scope>NUCLEOTIDE SEQUENCE [MRNA]</scope>
</reference>
<evidence type="ECO:0000250" key="1"/>
<evidence type="ECO:0000250" key="2">
    <source>
        <dbReference type="UniProtKB" id="P01900"/>
    </source>
</evidence>
<evidence type="ECO:0000255" key="3"/>
<evidence type="ECO:0000255" key="4">
    <source>
        <dbReference type="PROSITE-ProRule" id="PRU00114"/>
    </source>
</evidence>
<evidence type="ECO:0000305" key="5"/>
<name>1C01_GORGO</name>
<proteinExistence type="evidence at transcript level"/>
<dbReference type="EMBL" id="X60252">
    <property type="protein sequence ID" value="CAA42804.1"/>
    <property type="molecule type" value="mRNA"/>
</dbReference>
<dbReference type="EMBL" id="X60250">
    <property type="protein sequence ID" value="CAA42802.1"/>
    <property type="molecule type" value="mRNA"/>
</dbReference>
<dbReference type="PIR" id="JH0544">
    <property type="entry name" value="JH0544"/>
</dbReference>
<dbReference type="SMR" id="P30383"/>
<dbReference type="InParanoid" id="P30383"/>
<dbReference type="Proteomes" id="UP000001519">
    <property type="component" value="Unplaced"/>
</dbReference>
<dbReference type="GO" id="GO:0031901">
    <property type="term" value="C:early endosome membrane"/>
    <property type="evidence" value="ECO:0007669"/>
    <property type="project" value="UniProtKB-ARBA"/>
</dbReference>
<dbReference type="GO" id="GO:0012507">
    <property type="term" value="C:ER to Golgi transport vesicle membrane"/>
    <property type="evidence" value="ECO:0007669"/>
    <property type="project" value="UniProtKB-ARBA"/>
</dbReference>
<dbReference type="GO" id="GO:0009897">
    <property type="term" value="C:external side of plasma membrane"/>
    <property type="evidence" value="ECO:0000318"/>
    <property type="project" value="GO_Central"/>
</dbReference>
<dbReference type="GO" id="GO:0005615">
    <property type="term" value="C:extracellular space"/>
    <property type="evidence" value="ECO:0000318"/>
    <property type="project" value="GO_Central"/>
</dbReference>
<dbReference type="GO" id="GO:0098553">
    <property type="term" value="C:lumenal side of endoplasmic reticulum membrane"/>
    <property type="evidence" value="ECO:0007669"/>
    <property type="project" value="UniProtKB-ARBA"/>
</dbReference>
<dbReference type="GO" id="GO:0042612">
    <property type="term" value="C:MHC class I protein complex"/>
    <property type="evidence" value="ECO:0007669"/>
    <property type="project" value="UniProtKB-KW"/>
</dbReference>
<dbReference type="GO" id="GO:0030670">
    <property type="term" value="C:phagocytic vesicle membrane"/>
    <property type="evidence" value="ECO:0007669"/>
    <property type="project" value="UniProtKB-ARBA"/>
</dbReference>
<dbReference type="GO" id="GO:0055038">
    <property type="term" value="C:recycling endosome membrane"/>
    <property type="evidence" value="ECO:0007669"/>
    <property type="project" value="UniProtKB-ARBA"/>
</dbReference>
<dbReference type="GO" id="GO:0042605">
    <property type="term" value="F:peptide antigen binding"/>
    <property type="evidence" value="ECO:0000318"/>
    <property type="project" value="GO_Central"/>
</dbReference>
<dbReference type="GO" id="GO:0005102">
    <property type="term" value="F:signaling receptor binding"/>
    <property type="evidence" value="ECO:0000318"/>
    <property type="project" value="GO_Central"/>
</dbReference>
<dbReference type="GO" id="GO:0002486">
    <property type="term" value="P:antigen processing and presentation of endogenous peptide antigen via MHC class I via ER pathway, TAP-independent"/>
    <property type="evidence" value="ECO:0000318"/>
    <property type="project" value="GO_Central"/>
</dbReference>
<dbReference type="GO" id="GO:0002476">
    <property type="term" value="P:antigen processing and presentation of endogenous peptide antigen via MHC class Ib"/>
    <property type="evidence" value="ECO:0000318"/>
    <property type="project" value="GO_Central"/>
</dbReference>
<dbReference type="GO" id="GO:0006955">
    <property type="term" value="P:immune response"/>
    <property type="evidence" value="ECO:0000318"/>
    <property type="project" value="GO_Central"/>
</dbReference>
<dbReference type="GO" id="GO:0001916">
    <property type="term" value="P:positive regulation of T cell mediated cytotoxicity"/>
    <property type="evidence" value="ECO:0000318"/>
    <property type="project" value="GO_Central"/>
</dbReference>
<dbReference type="FunFam" id="2.60.40.10:FF:000014">
    <property type="entry name" value="H-2 class I histocompatibility antigen, alpha chain"/>
    <property type="match status" value="1"/>
</dbReference>
<dbReference type="FunFam" id="3.30.500.10:FF:000001">
    <property type="entry name" value="H-2 class I histocompatibility antigen, alpha chain"/>
    <property type="match status" value="1"/>
</dbReference>
<dbReference type="Gene3D" id="2.60.40.10">
    <property type="entry name" value="Immunoglobulins"/>
    <property type="match status" value="1"/>
</dbReference>
<dbReference type="Gene3D" id="3.30.500.10">
    <property type="entry name" value="MHC class I-like antigen recognition-like"/>
    <property type="match status" value="1"/>
</dbReference>
<dbReference type="InterPro" id="IPR007110">
    <property type="entry name" value="Ig-like_dom"/>
</dbReference>
<dbReference type="InterPro" id="IPR036179">
    <property type="entry name" value="Ig-like_dom_sf"/>
</dbReference>
<dbReference type="InterPro" id="IPR013783">
    <property type="entry name" value="Ig-like_fold"/>
</dbReference>
<dbReference type="InterPro" id="IPR003006">
    <property type="entry name" value="Ig/MHC_CS"/>
</dbReference>
<dbReference type="InterPro" id="IPR003597">
    <property type="entry name" value="Ig_C1-set"/>
</dbReference>
<dbReference type="InterPro" id="IPR050208">
    <property type="entry name" value="MHC_class-I_related"/>
</dbReference>
<dbReference type="InterPro" id="IPR011161">
    <property type="entry name" value="MHC_I-like_Ag-recog"/>
</dbReference>
<dbReference type="InterPro" id="IPR037055">
    <property type="entry name" value="MHC_I-like_Ag-recog_sf"/>
</dbReference>
<dbReference type="InterPro" id="IPR011162">
    <property type="entry name" value="MHC_I/II-like_Ag-recog"/>
</dbReference>
<dbReference type="InterPro" id="IPR001039">
    <property type="entry name" value="MHC_I_a_a1/a2"/>
</dbReference>
<dbReference type="InterPro" id="IPR010579">
    <property type="entry name" value="MHC_I_a_C"/>
</dbReference>
<dbReference type="PANTHER" id="PTHR16675:SF251">
    <property type="entry name" value="HLA CLASS I HISTOCOMPATIBILITY ANTIGEN, C ALPHA CHAIN"/>
    <property type="match status" value="1"/>
</dbReference>
<dbReference type="PANTHER" id="PTHR16675">
    <property type="entry name" value="MHC CLASS I-RELATED"/>
    <property type="match status" value="1"/>
</dbReference>
<dbReference type="Pfam" id="PF07654">
    <property type="entry name" value="C1-set"/>
    <property type="match status" value="1"/>
</dbReference>
<dbReference type="Pfam" id="PF00129">
    <property type="entry name" value="MHC_I"/>
    <property type="match status" value="1"/>
</dbReference>
<dbReference type="Pfam" id="PF06623">
    <property type="entry name" value="MHC_I_C"/>
    <property type="match status" value="1"/>
</dbReference>
<dbReference type="PRINTS" id="PR01638">
    <property type="entry name" value="MHCCLASSI"/>
</dbReference>
<dbReference type="SMART" id="SM00407">
    <property type="entry name" value="IGc1"/>
    <property type="match status" value="1"/>
</dbReference>
<dbReference type="SUPFAM" id="SSF48726">
    <property type="entry name" value="Immunoglobulin"/>
    <property type="match status" value="1"/>
</dbReference>
<dbReference type="SUPFAM" id="SSF54452">
    <property type="entry name" value="MHC antigen-recognition domain"/>
    <property type="match status" value="1"/>
</dbReference>
<dbReference type="PROSITE" id="PS50835">
    <property type="entry name" value="IG_LIKE"/>
    <property type="match status" value="1"/>
</dbReference>
<dbReference type="PROSITE" id="PS00290">
    <property type="entry name" value="IG_MHC"/>
    <property type="match status" value="1"/>
</dbReference>
<comment type="function">
    <text>Involved in the presentation of foreign antigens to the immune system.</text>
</comment>
<comment type="subunit">
    <text>Heterodimer of an alpha chain and a beta chain (beta-2-microglobulin).</text>
</comment>
<comment type="subcellular location">
    <subcellularLocation>
        <location>Membrane</location>
        <topology>Single-pass type I membrane protein</topology>
    </subcellularLocation>
</comment>
<comment type="similarity">
    <text evidence="5">Belongs to the MHC class I family.</text>
</comment>
<protein>
    <recommendedName>
        <fullName>Class I histocompatibility antigen, Gogo-C*0101/C*0102 alpha chain</fullName>
    </recommendedName>
</protein>
<feature type="signal peptide" evidence="1">
    <location>
        <begin position="1"/>
        <end position="24"/>
    </location>
</feature>
<feature type="chain" id="PRO_0000018905" description="Class I histocompatibility antigen, Gogo-C*0101/C*0102 alpha chain">
    <location>
        <begin position="25"/>
        <end position="365"/>
    </location>
</feature>
<feature type="topological domain" description="Extracellular" evidence="3">
    <location>
        <begin position="25"/>
        <end position="308"/>
    </location>
</feature>
<feature type="transmembrane region" description="Helical" evidence="3">
    <location>
        <begin position="309"/>
        <end position="332"/>
    </location>
</feature>
<feature type="topological domain" description="Cytoplasmic" evidence="3">
    <location>
        <begin position="333"/>
        <end position="365"/>
    </location>
</feature>
<feature type="domain" description="Ig-like C1-type">
    <location>
        <begin position="209"/>
        <end position="297"/>
    </location>
</feature>
<feature type="region of interest" description="Alpha-1">
    <location>
        <begin position="25"/>
        <end position="114"/>
    </location>
</feature>
<feature type="region of interest" description="Alpha-2">
    <location>
        <begin position="115"/>
        <end position="206"/>
    </location>
</feature>
<feature type="region of interest" description="Alpha-3">
    <location>
        <begin position="207"/>
        <end position="298"/>
    </location>
</feature>
<feature type="region of interest" description="Connecting peptide">
    <location>
        <begin position="299"/>
        <end position="308"/>
    </location>
</feature>
<feature type="modified residue" description="Phosphoserine" evidence="2">
    <location>
        <position position="356"/>
    </location>
</feature>
<feature type="modified residue" description="Phosphoserine" evidence="2">
    <location>
        <position position="359"/>
    </location>
</feature>
<feature type="glycosylation site" description="N-linked (GlcNAc...) asparagine" evidence="1">
    <location>
        <position position="110"/>
    </location>
</feature>
<feature type="disulfide bond" evidence="4">
    <location>
        <begin position="125"/>
        <end position="188"/>
    </location>
</feature>
<feature type="disulfide bond" evidence="4">
    <location>
        <begin position="227"/>
        <end position="283"/>
    </location>
</feature>
<keyword id="KW-1015">Disulfide bond</keyword>
<keyword id="KW-0325">Glycoprotein</keyword>
<keyword id="KW-0391">Immunity</keyword>
<keyword id="KW-0472">Membrane</keyword>
<keyword id="KW-0490">MHC I</keyword>
<keyword id="KW-0597">Phosphoprotein</keyword>
<keyword id="KW-1185">Reference proteome</keyword>
<keyword id="KW-0732">Signal</keyword>
<keyword id="KW-0812">Transmembrane</keyword>
<keyword id="KW-1133">Transmembrane helix</keyword>
<sequence length="365" mass="40938">MRVMAPRTLILLLSGALALTETWAGSHSMRYFFTAVAPPGRGEPRFIAVGYVDDTQFVRFDSDAANTRGEPRAPWVEQEGPEYWDRETQKYKRQAQTDRVSLRKLRGYYNQSEDGSHTFQRMYGCDVGPDGRLQRGYDQLAYDGKDYIALNEDLRSWTAADTAAQITQRKWEAARWAERQRAYLEGLCVEWLRRYLENGKETLQRADPPKTHVTHHPISDHEATLRCWALGFYPAEITLTWQRDGEEQTQDIELVETRPAGDGTFQKWAAMVVPSGEEQRYTCHVQHKGLLEPLTLRWEPSSQPTIPIVGIVAGLAVLAVVFTGTVVAAVMCRRKSSGGKGGSCSQAACSNSAQGSDESLIACKA</sequence>